<comment type="function">
    <text evidence="1">Has a role in meiosis.</text>
</comment>
<sequence length="217" mass="25019">MKRHANRIGEEFSQTVQFIKSETTLKQKKTKIDVQNVYGLDRNTKNLEKRDIQFLENDKLDLNSHENEGEKTKTETVPTRKQFPKVGEFNSAIHGLSSESVLRTCFRVGEVLAVFRMKRRDVCIIVEFFAKVRSAKKVGNVILYYFEDAFRGQKSPAIFAKYYSCCEISPLLTKPATMIRVVGIVSHAEKILKVIHIASSDLDELWDTYNMVLYETL</sequence>
<protein>
    <recommendedName>
        <fullName>Meiotically up-regulated gene 37 protein</fullName>
    </recommendedName>
</protein>
<name>MUG37_SCHPO</name>
<reference key="1">
    <citation type="journal article" date="2002" name="Nature">
        <title>The genome sequence of Schizosaccharomyces pombe.</title>
        <authorList>
            <person name="Wood V."/>
            <person name="Gwilliam R."/>
            <person name="Rajandream M.A."/>
            <person name="Lyne M.H."/>
            <person name="Lyne R."/>
            <person name="Stewart A."/>
            <person name="Sgouros J.G."/>
            <person name="Peat N."/>
            <person name="Hayles J."/>
            <person name="Baker S.G."/>
            <person name="Basham D."/>
            <person name="Bowman S."/>
            <person name="Brooks K."/>
            <person name="Brown D."/>
            <person name="Brown S."/>
            <person name="Chillingworth T."/>
            <person name="Churcher C.M."/>
            <person name="Collins M."/>
            <person name="Connor R."/>
            <person name="Cronin A."/>
            <person name="Davis P."/>
            <person name="Feltwell T."/>
            <person name="Fraser A."/>
            <person name="Gentles S."/>
            <person name="Goble A."/>
            <person name="Hamlin N."/>
            <person name="Harris D.E."/>
            <person name="Hidalgo J."/>
            <person name="Hodgson G."/>
            <person name="Holroyd S."/>
            <person name="Hornsby T."/>
            <person name="Howarth S."/>
            <person name="Huckle E.J."/>
            <person name="Hunt S."/>
            <person name="Jagels K."/>
            <person name="James K.D."/>
            <person name="Jones L."/>
            <person name="Jones M."/>
            <person name="Leather S."/>
            <person name="McDonald S."/>
            <person name="McLean J."/>
            <person name="Mooney P."/>
            <person name="Moule S."/>
            <person name="Mungall K.L."/>
            <person name="Murphy L.D."/>
            <person name="Niblett D."/>
            <person name="Odell C."/>
            <person name="Oliver K."/>
            <person name="O'Neil S."/>
            <person name="Pearson D."/>
            <person name="Quail M.A."/>
            <person name="Rabbinowitsch E."/>
            <person name="Rutherford K.M."/>
            <person name="Rutter S."/>
            <person name="Saunders D."/>
            <person name="Seeger K."/>
            <person name="Sharp S."/>
            <person name="Skelton J."/>
            <person name="Simmonds M.N."/>
            <person name="Squares R."/>
            <person name="Squares S."/>
            <person name="Stevens K."/>
            <person name="Taylor K."/>
            <person name="Taylor R.G."/>
            <person name="Tivey A."/>
            <person name="Walsh S.V."/>
            <person name="Warren T."/>
            <person name="Whitehead S."/>
            <person name="Woodward J.R."/>
            <person name="Volckaert G."/>
            <person name="Aert R."/>
            <person name="Robben J."/>
            <person name="Grymonprez B."/>
            <person name="Weltjens I."/>
            <person name="Vanstreels E."/>
            <person name="Rieger M."/>
            <person name="Schaefer M."/>
            <person name="Mueller-Auer S."/>
            <person name="Gabel C."/>
            <person name="Fuchs M."/>
            <person name="Duesterhoeft A."/>
            <person name="Fritzc C."/>
            <person name="Holzer E."/>
            <person name="Moestl D."/>
            <person name="Hilbert H."/>
            <person name="Borzym K."/>
            <person name="Langer I."/>
            <person name="Beck A."/>
            <person name="Lehrach H."/>
            <person name="Reinhardt R."/>
            <person name="Pohl T.M."/>
            <person name="Eger P."/>
            <person name="Zimmermann W."/>
            <person name="Wedler H."/>
            <person name="Wambutt R."/>
            <person name="Purnelle B."/>
            <person name="Goffeau A."/>
            <person name="Cadieu E."/>
            <person name="Dreano S."/>
            <person name="Gloux S."/>
            <person name="Lelaure V."/>
            <person name="Mottier S."/>
            <person name="Galibert F."/>
            <person name="Aves S.J."/>
            <person name="Xiang Z."/>
            <person name="Hunt C."/>
            <person name="Moore K."/>
            <person name="Hurst S.M."/>
            <person name="Lucas M."/>
            <person name="Rochet M."/>
            <person name="Gaillardin C."/>
            <person name="Tallada V.A."/>
            <person name="Garzon A."/>
            <person name="Thode G."/>
            <person name="Daga R.R."/>
            <person name="Cruzado L."/>
            <person name="Jimenez J."/>
            <person name="Sanchez M."/>
            <person name="del Rey F."/>
            <person name="Benito J."/>
            <person name="Dominguez A."/>
            <person name="Revuelta J.L."/>
            <person name="Moreno S."/>
            <person name="Armstrong J."/>
            <person name="Forsburg S.L."/>
            <person name="Cerutti L."/>
            <person name="Lowe T."/>
            <person name="McCombie W.R."/>
            <person name="Paulsen I."/>
            <person name="Potashkin J."/>
            <person name="Shpakovski G.V."/>
            <person name="Ussery D."/>
            <person name="Barrell B.G."/>
            <person name="Nurse P."/>
        </authorList>
    </citation>
    <scope>NUCLEOTIDE SEQUENCE [LARGE SCALE GENOMIC DNA]</scope>
    <source>
        <strain>972 / ATCC 24843</strain>
    </source>
</reference>
<reference key="2">
    <citation type="journal article" date="2005" name="Curr. Biol.">
        <title>A large-scale screen in S. pombe identifies seven novel genes required for critical meiotic events.</title>
        <authorList>
            <person name="Martin-Castellanos C."/>
            <person name="Blanco M."/>
            <person name="Rozalen A.E."/>
            <person name="Perez-Hidalgo L."/>
            <person name="Garcia A.I."/>
            <person name="Conde F."/>
            <person name="Mata J."/>
            <person name="Ellermeier C."/>
            <person name="Davis L."/>
            <person name="San-Segundo P."/>
            <person name="Smith G.R."/>
            <person name="Moreno S."/>
        </authorList>
    </citation>
    <scope>FUNCTION IN MEIOSIS</scope>
</reference>
<keyword id="KW-0469">Meiosis</keyword>
<keyword id="KW-1185">Reference proteome</keyword>
<dbReference type="EMBL" id="CU329671">
    <property type="protein sequence ID" value="CAB10082.1"/>
    <property type="molecule type" value="Genomic_DNA"/>
</dbReference>
<dbReference type="PIR" id="T40208">
    <property type="entry name" value="T40208"/>
</dbReference>
<dbReference type="RefSeq" id="NP_596567.1">
    <property type="nucleotide sequence ID" value="NM_001022488.2"/>
</dbReference>
<dbReference type="BioGRID" id="276919">
    <property type="interactions" value="5"/>
</dbReference>
<dbReference type="STRING" id="284812.P87307"/>
<dbReference type="PaxDb" id="4896-SPBC31F10.05.1"/>
<dbReference type="EnsemblFungi" id="SPBC31F10.05.1">
    <property type="protein sequence ID" value="SPBC31F10.05.1:pep"/>
    <property type="gene ID" value="SPBC31F10.05"/>
</dbReference>
<dbReference type="GeneID" id="2540391"/>
<dbReference type="KEGG" id="spo:2540391"/>
<dbReference type="PomBase" id="SPBC31F10.05">
    <property type="gene designation" value="mug37"/>
</dbReference>
<dbReference type="VEuPathDB" id="FungiDB:SPBC31F10.05"/>
<dbReference type="eggNOG" id="ENOG502S8X6">
    <property type="taxonomic scope" value="Eukaryota"/>
</dbReference>
<dbReference type="HOGENOM" id="CLU_1272918_0_0_1"/>
<dbReference type="InParanoid" id="P87307"/>
<dbReference type="OMA" id="GSKSPCI"/>
<dbReference type="PRO" id="PR:P87307"/>
<dbReference type="Proteomes" id="UP000002485">
    <property type="component" value="Chromosome II"/>
</dbReference>
<dbReference type="GO" id="GO:0051321">
    <property type="term" value="P:meiotic cell cycle"/>
    <property type="evidence" value="ECO:0007669"/>
    <property type="project" value="UniProtKB-KW"/>
</dbReference>
<proteinExistence type="evidence at protein level"/>
<gene>
    <name type="primary">mug37</name>
    <name type="ORF">SPBC31F10.05</name>
</gene>
<organism>
    <name type="scientific">Schizosaccharomyces pombe (strain 972 / ATCC 24843)</name>
    <name type="common">Fission yeast</name>
    <dbReference type="NCBI Taxonomy" id="284812"/>
    <lineage>
        <taxon>Eukaryota</taxon>
        <taxon>Fungi</taxon>
        <taxon>Dikarya</taxon>
        <taxon>Ascomycota</taxon>
        <taxon>Taphrinomycotina</taxon>
        <taxon>Schizosaccharomycetes</taxon>
        <taxon>Schizosaccharomycetales</taxon>
        <taxon>Schizosaccharomycetaceae</taxon>
        <taxon>Schizosaccharomyces</taxon>
    </lineage>
</organism>
<evidence type="ECO:0000269" key="1">
    <source>
    </source>
</evidence>
<feature type="chain" id="PRO_0000278498" description="Meiotically up-regulated gene 37 protein">
    <location>
        <begin position="1"/>
        <end position="217"/>
    </location>
</feature>
<accession>P87307</accession>